<accession>B4T0M5</accession>
<reference key="1">
    <citation type="journal article" date="2011" name="J. Bacteriol.">
        <title>Comparative genomics of 28 Salmonella enterica isolates: evidence for CRISPR-mediated adaptive sublineage evolution.</title>
        <authorList>
            <person name="Fricke W.F."/>
            <person name="Mammel M.K."/>
            <person name="McDermott P.F."/>
            <person name="Tartera C."/>
            <person name="White D.G."/>
            <person name="Leclerc J.E."/>
            <person name="Ravel J."/>
            <person name="Cebula T.A."/>
        </authorList>
    </citation>
    <scope>NUCLEOTIDE SEQUENCE [LARGE SCALE GENOMIC DNA]</scope>
    <source>
        <strain>SL254</strain>
    </source>
</reference>
<proteinExistence type="inferred from homology"/>
<comment type="function">
    <text evidence="1">Mediates the interaction of DNA replication initiator protein DnaA with DNA polymerase subunit beta sliding clamp (dnaN). Stimulates hydrolysis of ATP-DnaA to ADP-DnaA, rendering DnaA inactive for reinitiation, a process called regulatory inhibition of DnaA or RIDA (By similarity).</text>
</comment>
<comment type="subunit">
    <text evidence="2">The active form seems to be an ADP-bound monomer. Forms the RIDA complex (regulatory inactivation of DnaA) of ATP-DnaA, ADP-Hda and the DNA-loaded beta sliding clamp (dnaN).</text>
</comment>
<comment type="similarity">
    <text evidence="2">Belongs to the DnaA family. HdA subfamily.</text>
</comment>
<protein>
    <recommendedName>
        <fullName evidence="2">DnaA regulatory inactivator Hda</fullName>
    </recommendedName>
</protein>
<keyword id="KW-0235">DNA replication</keyword>
<keyword id="KW-0236">DNA replication inhibitor</keyword>
<organism>
    <name type="scientific">Salmonella newport (strain SL254)</name>
    <dbReference type="NCBI Taxonomy" id="423368"/>
    <lineage>
        <taxon>Bacteria</taxon>
        <taxon>Pseudomonadati</taxon>
        <taxon>Pseudomonadota</taxon>
        <taxon>Gammaproteobacteria</taxon>
        <taxon>Enterobacterales</taxon>
        <taxon>Enterobacteriaceae</taxon>
        <taxon>Salmonella</taxon>
    </lineage>
</organism>
<evidence type="ECO:0000250" key="1"/>
<evidence type="ECO:0000255" key="2">
    <source>
        <dbReference type="HAMAP-Rule" id="MF_01158"/>
    </source>
</evidence>
<feature type="chain" id="PRO_1000137821" description="DnaA regulatory inactivator Hda">
    <location>
        <begin position="1"/>
        <end position="241"/>
    </location>
</feature>
<gene>
    <name evidence="2" type="primary">hda</name>
    <name type="ordered locus">SNSL254_A2691</name>
</gene>
<name>HDA_SALNS</name>
<sequence>MSSWVEVSLNTPAQLSLPLYLPDDETFASFWPGDNASLLAALQNVLRQEHSGYIYLWAREGAGRSHLLHAACAELSQRGDAVGYVPLDKRTWFVPEVLDGMEHLSLVCIDNIECVAGDELWEMAIFDLYNRILESGKTRLLITGDRPPRQLNLGLPDLASRLDWGQIYKLQPLSDEDKLQALQLRARLRGFELPEDVGRFLLKRLDREMRTLFMTLDQLDHASITAQRKLTIPFVKEILKL</sequence>
<dbReference type="EMBL" id="CP001113">
    <property type="protein sequence ID" value="ACF65024.1"/>
    <property type="molecule type" value="Genomic_DNA"/>
</dbReference>
<dbReference type="SMR" id="B4T0M5"/>
<dbReference type="KEGG" id="see:SNSL254_A2691"/>
<dbReference type="HOGENOM" id="CLU_072265_1_1_6"/>
<dbReference type="Proteomes" id="UP000008824">
    <property type="component" value="Chromosome"/>
</dbReference>
<dbReference type="GO" id="GO:0006270">
    <property type="term" value="P:DNA replication initiation"/>
    <property type="evidence" value="ECO:0007669"/>
    <property type="project" value="TreeGrafter"/>
</dbReference>
<dbReference type="GO" id="GO:0032297">
    <property type="term" value="P:negative regulation of DNA-templated DNA replication initiation"/>
    <property type="evidence" value="ECO:0007669"/>
    <property type="project" value="InterPro"/>
</dbReference>
<dbReference type="FunFam" id="1.10.8.60:FF:000024">
    <property type="entry name" value="DnaA regulatory inactivator Hda"/>
    <property type="match status" value="1"/>
</dbReference>
<dbReference type="FunFam" id="3.40.50.300:FF:000452">
    <property type="entry name" value="DnaA regulatory inactivator Hda"/>
    <property type="match status" value="1"/>
</dbReference>
<dbReference type="Gene3D" id="1.10.8.60">
    <property type="match status" value="1"/>
</dbReference>
<dbReference type="Gene3D" id="3.40.50.300">
    <property type="entry name" value="P-loop containing nucleotide triphosphate hydrolases"/>
    <property type="match status" value="1"/>
</dbReference>
<dbReference type="HAMAP" id="MF_01158">
    <property type="entry name" value="Hda"/>
    <property type="match status" value="1"/>
</dbReference>
<dbReference type="InterPro" id="IPR020591">
    <property type="entry name" value="Chromosome_initiator_DnaA-like"/>
</dbReference>
<dbReference type="InterPro" id="IPR013317">
    <property type="entry name" value="DnaA_dom"/>
</dbReference>
<dbReference type="InterPro" id="IPR017788">
    <property type="entry name" value="Hda"/>
</dbReference>
<dbReference type="InterPro" id="IPR022864">
    <property type="entry name" value="Hda_Enterobact"/>
</dbReference>
<dbReference type="InterPro" id="IPR055199">
    <property type="entry name" value="Hda_lid"/>
</dbReference>
<dbReference type="InterPro" id="IPR027417">
    <property type="entry name" value="P-loop_NTPase"/>
</dbReference>
<dbReference type="NCBIfam" id="TIGR03420">
    <property type="entry name" value="DnaA_homol_Hda"/>
    <property type="match status" value="1"/>
</dbReference>
<dbReference type="NCBIfam" id="NF005982">
    <property type="entry name" value="PRK08084.1"/>
    <property type="match status" value="1"/>
</dbReference>
<dbReference type="PANTHER" id="PTHR30050">
    <property type="entry name" value="CHROMOSOMAL REPLICATION INITIATOR PROTEIN DNAA"/>
    <property type="match status" value="1"/>
</dbReference>
<dbReference type="PANTHER" id="PTHR30050:SF5">
    <property type="entry name" value="DNAA REGULATORY INACTIVATOR HDA"/>
    <property type="match status" value="1"/>
</dbReference>
<dbReference type="Pfam" id="PF00308">
    <property type="entry name" value="Bac_DnaA"/>
    <property type="match status" value="1"/>
</dbReference>
<dbReference type="Pfam" id="PF22688">
    <property type="entry name" value="Hda_lid"/>
    <property type="match status" value="1"/>
</dbReference>
<dbReference type="PRINTS" id="PR00051">
    <property type="entry name" value="DNAA"/>
</dbReference>
<dbReference type="SUPFAM" id="SSF52540">
    <property type="entry name" value="P-loop containing nucleoside triphosphate hydrolases"/>
    <property type="match status" value="1"/>
</dbReference>